<reference key="1">
    <citation type="journal article" date="2009" name="PLoS Genet.">
        <title>Organised genome dynamics in the Escherichia coli species results in highly diverse adaptive paths.</title>
        <authorList>
            <person name="Touchon M."/>
            <person name="Hoede C."/>
            <person name="Tenaillon O."/>
            <person name="Barbe V."/>
            <person name="Baeriswyl S."/>
            <person name="Bidet P."/>
            <person name="Bingen E."/>
            <person name="Bonacorsi S."/>
            <person name="Bouchier C."/>
            <person name="Bouvet O."/>
            <person name="Calteau A."/>
            <person name="Chiapello H."/>
            <person name="Clermont O."/>
            <person name="Cruveiller S."/>
            <person name="Danchin A."/>
            <person name="Diard M."/>
            <person name="Dossat C."/>
            <person name="Karoui M.E."/>
            <person name="Frapy E."/>
            <person name="Garry L."/>
            <person name="Ghigo J.M."/>
            <person name="Gilles A.M."/>
            <person name="Johnson J."/>
            <person name="Le Bouguenec C."/>
            <person name="Lescat M."/>
            <person name="Mangenot S."/>
            <person name="Martinez-Jehanne V."/>
            <person name="Matic I."/>
            <person name="Nassif X."/>
            <person name="Oztas S."/>
            <person name="Petit M.A."/>
            <person name="Pichon C."/>
            <person name="Rouy Z."/>
            <person name="Ruf C.S."/>
            <person name="Schneider D."/>
            <person name="Tourret J."/>
            <person name="Vacherie B."/>
            <person name="Vallenet D."/>
            <person name="Medigue C."/>
            <person name="Rocha E.P.C."/>
            <person name="Denamur E."/>
        </authorList>
    </citation>
    <scope>NUCLEOTIDE SEQUENCE [LARGE SCALE GENOMIC DNA]</scope>
    <source>
        <strain>S88 / ExPEC</strain>
    </source>
</reference>
<comment type="function">
    <text evidence="1">Cell division inhibitor that blocks the formation of polar Z ring septums. Rapidly oscillates between the poles of the cell to destabilize FtsZ filaments that have formed before they mature into polar Z rings. Prevents FtsZ polymerization.</text>
</comment>
<comment type="subunit">
    <text evidence="1">Interacts with MinD and FtsZ.</text>
</comment>
<comment type="similarity">
    <text evidence="1">Belongs to the MinC family.</text>
</comment>
<gene>
    <name evidence="1" type="primary">minC</name>
    <name type="ordered locus">ECS88_1239</name>
</gene>
<protein>
    <recommendedName>
        <fullName evidence="1">Probable septum site-determining protein MinC</fullName>
    </recommendedName>
</protein>
<accession>B7MK73</accession>
<evidence type="ECO:0000255" key="1">
    <source>
        <dbReference type="HAMAP-Rule" id="MF_00267"/>
    </source>
</evidence>
<evidence type="ECO:0000256" key="2">
    <source>
        <dbReference type="SAM" id="MobiDB-lite"/>
    </source>
</evidence>
<sequence length="231" mass="24776">MSNTPIELKGSSFTLSVVHLHEAEPKVIHQALEDKIAQAPAFLKHAPVVLNVSALEDPVNWSAMHKAVSATGLRVIGVSGCKDAQLKAEIEKMGLPILTEGKEKAPRPAPAPQAPTQNTTPVTKTRLIDTPVRSGQRIYAPQCDLIVTSHVSAGAELIADGNIHVYGMMRGRALAGASGDRETQIFCTNLMAELVSIAGEYWLSDQIPAEFYGKAARLQLVENALTVQPLN</sequence>
<name>MINC_ECO45</name>
<organism>
    <name type="scientific">Escherichia coli O45:K1 (strain S88 / ExPEC)</name>
    <dbReference type="NCBI Taxonomy" id="585035"/>
    <lineage>
        <taxon>Bacteria</taxon>
        <taxon>Pseudomonadati</taxon>
        <taxon>Pseudomonadota</taxon>
        <taxon>Gammaproteobacteria</taxon>
        <taxon>Enterobacterales</taxon>
        <taxon>Enterobacteriaceae</taxon>
        <taxon>Escherichia</taxon>
    </lineage>
</organism>
<keyword id="KW-0131">Cell cycle</keyword>
<keyword id="KW-0132">Cell division</keyword>
<keyword id="KW-1185">Reference proteome</keyword>
<keyword id="KW-0717">Septation</keyword>
<proteinExistence type="inferred from homology"/>
<dbReference type="EMBL" id="CU928161">
    <property type="protein sequence ID" value="CAR02565.1"/>
    <property type="molecule type" value="Genomic_DNA"/>
</dbReference>
<dbReference type="RefSeq" id="WP_001514137.1">
    <property type="nucleotide sequence ID" value="NC_011742.1"/>
</dbReference>
<dbReference type="SMR" id="B7MK73"/>
<dbReference type="KEGG" id="ecz:ECS88_1239"/>
<dbReference type="HOGENOM" id="CLU_067812_0_1_6"/>
<dbReference type="Proteomes" id="UP000000747">
    <property type="component" value="Chromosome"/>
</dbReference>
<dbReference type="GO" id="GO:0000902">
    <property type="term" value="P:cell morphogenesis"/>
    <property type="evidence" value="ECO:0007669"/>
    <property type="project" value="InterPro"/>
</dbReference>
<dbReference type="GO" id="GO:0000917">
    <property type="term" value="P:division septum assembly"/>
    <property type="evidence" value="ECO:0007669"/>
    <property type="project" value="UniProtKB-KW"/>
</dbReference>
<dbReference type="GO" id="GO:0051302">
    <property type="term" value="P:regulation of cell division"/>
    <property type="evidence" value="ECO:0007669"/>
    <property type="project" value="InterPro"/>
</dbReference>
<dbReference type="GO" id="GO:1901891">
    <property type="term" value="P:regulation of cell septum assembly"/>
    <property type="evidence" value="ECO:0007669"/>
    <property type="project" value="InterPro"/>
</dbReference>
<dbReference type="FunFam" id="2.160.20.70:FF:000002">
    <property type="entry name" value="Probable septum site-determining protein MinC"/>
    <property type="match status" value="1"/>
</dbReference>
<dbReference type="Gene3D" id="2.160.20.70">
    <property type="match status" value="1"/>
</dbReference>
<dbReference type="Gene3D" id="3.30.70.260">
    <property type="match status" value="1"/>
</dbReference>
<dbReference type="HAMAP" id="MF_00267">
    <property type="entry name" value="MinC"/>
    <property type="match status" value="1"/>
</dbReference>
<dbReference type="InterPro" id="IPR016098">
    <property type="entry name" value="CAP/MinC_C"/>
</dbReference>
<dbReference type="InterPro" id="IPR013033">
    <property type="entry name" value="MinC"/>
</dbReference>
<dbReference type="InterPro" id="IPR036145">
    <property type="entry name" value="MinC_C_sf"/>
</dbReference>
<dbReference type="InterPro" id="IPR007874">
    <property type="entry name" value="MinC_N"/>
</dbReference>
<dbReference type="InterPro" id="IPR005526">
    <property type="entry name" value="Septum_form_inhib_MinC_C"/>
</dbReference>
<dbReference type="NCBIfam" id="TIGR01222">
    <property type="entry name" value="minC"/>
    <property type="match status" value="1"/>
</dbReference>
<dbReference type="PANTHER" id="PTHR34108">
    <property type="entry name" value="SEPTUM SITE-DETERMINING PROTEIN MINC"/>
    <property type="match status" value="1"/>
</dbReference>
<dbReference type="PANTHER" id="PTHR34108:SF1">
    <property type="entry name" value="SEPTUM SITE-DETERMINING PROTEIN MINC"/>
    <property type="match status" value="1"/>
</dbReference>
<dbReference type="Pfam" id="PF03775">
    <property type="entry name" value="MinC_C"/>
    <property type="match status" value="1"/>
</dbReference>
<dbReference type="Pfam" id="PF05209">
    <property type="entry name" value="MinC_N"/>
    <property type="match status" value="1"/>
</dbReference>
<dbReference type="SUPFAM" id="SSF63848">
    <property type="entry name" value="Cell-division inhibitor MinC, C-terminal domain"/>
    <property type="match status" value="1"/>
</dbReference>
<feature type="chain" id="PRO_1000191247" description="Probable septum site-determining protein MinC">
    <location>
        <begin position="1"/>
        <end position="231"/>
    </location>
</feature>
<feature type="region of interest" description="Disordered" evidence="2">
    <location>
        <begin position="102"/>
        <end position="125"/>
    </location>
</feature>
<feature type="compositionally biased region" description="Low complexity" evidence="2">
    <location>
        <begin position="114"/>
        <end position="123"/>
    </location>
</feature>